<keyword id="KW-0489">Methyltransferase</keyword>
<keyword id="KW-1185">Reference proteome</keyword>
<keyword id="KW-0949">S-adenosyl-L-methionine</keyword>
<keyword id="KW-0808">Transferase</keyword>
<comment type="function">
    <text evidence="1">Methylates the carboxyl group of the C-terminal leucine residue of protein phosphatase 2A catalytic subunits to form alpha-leucine ester residues.</text>
</comment>
<comment type="catalytic activity">
    <reaction>
        <text>[phosphatase 2A protein]-C-terminal L-leucine + S-adenosyl-L-methionine = [phosphatase 2A protein]-C-terminal L-leucine methyl ester + S-adenosyl-L-homocysteine</text>
        <dbReference type="Rhea" id="RHEA:48544"/>
        <dbReference type="Rhea" id="RHEA-COMP:12134"/>
        <dbReference type="Rhea" id="RHEA-COMP:12135"/>
        <dbReference type="ChEBI" id="CHEBI:57856"/>
        <dbReference type="ChEBI" id="CHEBI:59789"/>
        <dbReference type="ChEBI" id="CHEBI:90516"/>
        <dbReference type="ChEBI" id="CHEBI:90517"/>
        <dbReference type="EC" id="2.1.1.233"/>
    </reaction>
</comment>
<comment type="similarity">
    <text evidence="2">Belongs to the methyltransferase superfamily. LCMT family.</text>
</comment>
<sequence length="369" mass="42526">MISPQEKQDKVIRATDLDALSCRYSANNKSYFSKPDPFIDSLISSYKMHLPLCTGYTNMSANRTLRSVFNEQKLPLINRGTYLRTESIDVITQEFIKEFKKCQVISLGGGSDTRCFRILEEHGEDVRYCEIDFHESVKIKKLAIINDKKLADIVKYDEESQSITSKEEFARLESNIHTENYHLIGYDLRELTGALDSGAILEYVDTSLPTLILSECVLCYLNPKENERIIEFWKNAFASKALLALLIYEPMSLNDAFGTTMTHNLSNRGINLLTFNEYPNLEARYKFLSEKCQSSNVKLTDMSNVGGYDSDNTTKAWINSKDLARINRLELVDEIEEIRLLLKHYCLCYCEFSHSPSLKTINKWKWILE</sequence>
<organism>
    <name type="scientific">Debaryomyces hansenii (strain ATCC 36239 / CBS 767 / BCRC 21394 / JCM 1990 / NBRC 0083 / IGC 2968)</name>
    <name type="common">Yeast</name>
    <name type="synonym">Torulaspora hansenii</name>
    <dbReference type="NCBI Taxonomy" id="284592"/>
    <lineage>
        <taxon>Eukaryota</taxon>
        <taxon>Fungi</taxon>
        <taxon>Dikarya</taxon>
        <taxon>Ascomycota</taxon>
        <taxon>Saccharomycotina</taxon>
        <taxon>Pichiomycetes</taxon>
        <taxon>Debaryomycetaceae</taxon>
        <taxon>Debaryomyces</taxon>
    </lineage>
</organism>
<accession>Q6BQD2</accession>
<feature type="chain" id="PRO_0000226127" description="Leucine carboxyl methyltransferase 1">
    <location>
        <begin position="1"/>
        <end position="369"/>
    </location>
</feature>
<feature type="binding site" evidence="1">
    <location>
        <position position="84"/>
    </location>
    <ligand>
        <name>S-adenosyl-L-methionine</name>
        <dbReference type="ChEBI" id="CHEBI:59789"/>
    </ligand>
</feature>
<feature type="binding site" evidence="1">
    <location>
        <position position="108"/>
    </location>
    <ligand>
        <name>S-adenosyl-L-methionine</name>
        <dbReference type="ChEBI" id="CHEBI:59789"/>
    </ligand>
</feature>
<feature type="binding site" evidence="1">
    <location>
        <position position="132"/>
    </location>
    <ligand>
        <name>S-adenosyl-L-methionine</name>
        <dbReference type="ChEBI" id="CHEBI:59789"/>
    </ligand>
</feature>
<feature type="binding site" evidence="1">
    <location>
        <begin position="187"/>
        <end position="188"/>
    </location>
    <ligand>
        <name>S-adenosyl-L-methionine</name>
        <dbReference type="ChEBI" id="CHEBI:59789"/>
    </ligand>
</feature>
<feature type="binding site" evidence="1">
    <location>
        <position position="215"/>
    </location>
    <ligand>
        <name>S-adenosyl-L-methionine</name>
        <dbReference type="ChEBI" id="CHEBI:59789"/>
    </ligand>
</feature>
<dbReference type="EC" id="2.1.1.233"/>
<dbReference type="EMBL" id="CR382137">
    <property type="protein sequence ID" value="CAG87815.2"/>
    <property type="molecule type" value="Genomic_DNA"/>
</dbReference>
<dbReference type="RefSeq" id="XP_459588.2">
    <property type="nucleotide sequence ID" value="XM_459588.1"/>
</dbReference>
<dbReference type="SMR" id="Q6BQD2"/>
<dbReference type="FunCoup" id="Q6BQD2">
    <property type="interactions" value="569"/>
</dbReference>
<dbReference type="STRING" id="284592.Q6BQD2"/>
<dbReference type="GeneID" id="2901885"/>
<dbReference type="KEGG" id="dha:DEHA2E06094g"/>
<dbReference type="VEuPathDB" id="FungiDB:DEHA2E06094g"/>
<dbReference type="eggNOG" id="KOG2918">
    <property type="taxonomic scope" value="Eukaryota"/>
</dbReference>
<dbReference type="HOGENOM" id="CLU_031312_1_0_1"/>
<dbReference type="InParanoid" id="Q6BQD2"/>
<dbReference type="OMA" id="IIYEPIR"/>
<dbReference type="OrthoDB" id="203237at2759"/>
<dbReference type="Proteomes" id="UP000000599">
    <property type="component" value="Chromosome E"/>
</dbReference>
<dbReference type="GO" id="GO:0018423">
    <property type="term" value="F:protein C-terminal leucine carboxyl O-methyltransferase activity"/>
    <property type="evidence" value="ECO:0007669"/>
    <property type="project" value="UniProtKB-EC"/>
</dbReference>
<dbReference type="GO" id="GO:0032259">
    <property type="term" value="P:methylation"/>
    <property type="evidence" value="ECO:0007669"/>
    <property type="project" value="UniProtKB-KW"/>
</dbReference>
<dbReference type="Gene3D" id="3.40.50.150">
    <property type="entry name" value="Vaccinia Virus protein VP39"/>
    <property type="match status" value="1"/>
</dbReference>
<dbReference type="InterPro" id="IPR016651">
    <property type="entry name" value="LCMT1"/>
</dbReference>
<dbReference type="InterPro" id="IPR007213">
    <property type="entry name" value="Ppm1/Ppm2/Tcmp"/>
</dbReference>
<dbReference type="InterPro" id="IPR029063">
    <property type="entry name" value="SAM-dependent_MTases_sf"/>
</dbReference>
<dbReference type="PANTHER" id="PTHR13600">
    <property type="entry name" value="LEUCINE CARBOXYL METHYLTRANSFERASE"/>
    <property type="match status" value="1"/>
</dbReference>
<dbReference type="PANTHER" id="PTHR13600:SF21">
    <property type="entry name" value="LEUCINE CARBOXYL METHYLTRANSFERASE 1"/>
    <property type="match status" value="1"/>
</dbReference>
<dbReference type="Pfam" id="PF04072">
    <property type="entry name" value="LCM"/>
    <property type="match status" value="1"/>
</dbReference>
<dbReference type="PIRSF" id="PIRSF016305">
    <property type="entry name" value="LCM_mtfrase"/>
    <property type="match status" value="1"/>
</dbReference>
<dbReference type="SUPFAM" id="SSF53335">
    <property type="entry name" value="S-adenosyl-L-methionine-dependent methyltransferases"/>
    <property type="match status" value="1"/>
</dbReference>
<gene>
    <name type="primary">PPM1</name>
    <name type="ordered locus">DEHA2E06094g</name>
</gene>
<evidence type="ECO:0000250" key="1"/>
<evidence type="ECO:0000305" key="2"/>
<proteinExistence type="inferred from homology"/>
<reference key="1">
    <citation type="journal article" date="2004" name="Nature">
        <title>Genome evolution in yeasts.</title>
        <authorList>
            <person name="Dujon B."/>
            <person name="Sherman D."/>
            <person name="Fischer G."/>
            <person name="Durrens P."/>
            <person name="Casaregola S."/>
            <person name="Lafontaine I."/>
            <person name="de Montigny J."/>
            <person name="Marck C."/>
            <person name="Neuveglise C."/>
            <person name="Talla E."/>
            <person name="Goffard N."/>
            <person name="Frangeul L."/>
            <person name="Aigle M."/>
            <person name="Anthouard V."/>
            <person name="Babour A."/>
            <person name="Barbe V."/>
            <person name="Barnay S."/>
            <person name="Blanchin S."/>
            <person name="Beckerich J.-M."/>
            <person name="Beyne E."/>
            <person name="Bleykasten C."/>
            <person name="Boisrame A."/>
            <person name="Boyer J."/>
            <person name="Cattolico L."/>
            <person name="Confanioleri F."/>
            <person name="de Daruvar A."/>
            <person name="Despons L."/>
            <person name="Fabre E."/>
            <person name="Fairhead C."/>
            <person name="Ferry-Dumazet H."/>
            <person name="Groppi A."/>
            <person name="Hantraye F."/>
            <person name="Hennequin C."/>
            <person name="Jauniaux N."/>
            <person name="Joyet P."/>
            <person name="Kachouri R."/>
            <person name="Kerrest A."/>
            <person name="Koszul R."/>
            <person name="Lemaire M."/>
            <person name="Lesur I."/>
            <person name="Ma L."/>
            <person name="Muller H."/>
            <person name="Nicaud J.-M."/>
            <person name="Nikolski M."/>
            <person name="Oztas S."/>
            <person name="Ozier-Kalogeropoulos O."/>
            <person name="Pellenz S."/>
            <person name="Potier S."/>
            <person name="Richard G.-F."/>
            <person name="Straub M.-L."/>
            <person name="Suleau A."/>
            <person name="Swennen D."/>
            <person name="Tekaia F."/>
            <person name="Wesolowski-Louvel M."/>
            <person name="Westhof E."/>
            <person name="Wirth B."/>
            <person name="Zeniou-Meyer M."/>
            <person name="Zivanovic Y."/>
            <person name="Bolotin-Fukuhara M."/>
            <person name="Thierry A."/>
            <person name="Bouchier C."/>
            <person name="Caudron B."/>
            <person name="Scarpelli C."/>
            <person name="Gaillardin C."/>
            <person name="Weissenbach J."/>
            <person name="Wincker P."/>
            <person name="Souciet J.-L."/>
        </authorList>
    </citation>
    <scope>NUCLEOTIDE SEQUENCE [LARGE SCALE GENOMIC DNA]</scope>
    <source>
        <strain>ATCC 36239 / CBS 767 / BCRC 21394 / JCM 1990 / NBRC 0083 / IGC 2968</strain>
    </source>
</reference>
<protein>
    <recommendedName>
        <fullName>Leucine carboxyl methyltransferase 1</fullName>
        <ecNumber>2.1.1.233</ecNumber>
    </recommendedName>
    <alternativeName>
        <fullName>Protein phosphatase methyltransferase 1</fullName>
    </alternativeName>
    <alternativeName>
        <fullName>[Phosphatase 2A protein]-leucine-carboxy methyltransferase 1</fullName>
    </alternativeName>
</protein>
<name>LCMT1_DEBHA</name>